<name>SERC_BACTN</name>
<protein>
    <recommendedName>
        <fullName evidence="1">Phosphoserine aminotransferase</fullName>
        <ecNumber evidence="1">2.6.1.52</ecNumber>
    </recommendedName>
    <alternativeName>
        <fullName evidence="1">Phosphohydroxythreonine aminotransferase</fullName>
        <shortName evidence="1">PSAT</shortName>
    </alternativeName>
</protein>
<feature type="chain" id="PRO_0000150154" description="Phosphoserine aminotransferase">
    <location>
        <begin position="1"/>
        <end position="355"/>
    </location>
</feature>
<feature type="binding site" evidence="1">
    <location>
        <position position="41"/>
    </location>
    <ligand>
        <name>L-glutamate</name>
        <dbReference type="ChEBI" id="CHEBI:29985"/>
    </ligand>
</feature>
<feature type="binding site" evidence="1">
    <location>
        <begin position="75"/>
        <end position="76"/>
    </location>
    <ligand>
        <name>pyridoxal 5'-phosphate</name>
        <dbReference type="ChEBI" id="CHEBI:597326"/>
    </ligand>
</feature>
<feature type="binding site" evidence="1">
    <location>
        <position position="99"/>
    </location>
    <ligand>
        <name>pyridoxal 5'-phosphate</name>
        <dbReference type="ChEBI" id="CHEBI:597326"/>
    </ligand>
</feature>
<feature type="binding site" evidence="1">
    <location>
        <position position="147"/>
    </location>
    <ligand>
        <name>pyridoxal 5'-phosphate</name>
        <dbReference type="ChEBI" id="CHEBI:597326"/>
    </ligand>
</feature>
<feature type="binding site" evidence="1">
    <location>
        <position position="166"/>
    </location>
    <ligand>
        <name>pyridoxal 5'-phosphate</name>
        <dbReference type="ChEBI" id="CHEBI:597326"/>
    </ligand>
</feature>
<feature type="binding site" evidence="1">
    <location>
        <position position="189"/>
    </location>
    <ligand>
        <name>pyridoxal 5'-phosphate</name>
        <dbReference type="ChEBI" id="CHEBI:597326"/>
    </ligand>
</feature>
<feature type="binding site" evidence="1">
    <location>
        <begin position="231"/>
        <end position="232"/>
    </location>
    <ligand>
        <name>pyridoxal 5'-phosphate</name>
        <dbReference type="ChEBI" id="CHEBI:597326"/>
    </ligand>
</feature>
<feature type="modified residue" description="N6-(pyridoxal phosphate)lysine" evidence="1">
    <location>
        <position position="190"/>
    </location>
</feature>
<keyword id="KW-0028">Amino-acid biosynthesis</keyword>
<keyword id="KW-0032">Aminotransferase</keyword>
<keyword id="KW-0963">Cytoplasm</keyword>
<keyword id="KW-0663">Pyridoxal phosphate</keyword>
<keyword id="KW-0664">Pyridoxine biosynthesis</keyword>
<keyword id="KW-1185">Reference proteome</keyword>
<keyword id="KW-0718">Serine biosynthesis</keyword>
<keyword id="KW-0808">Transferase</keyword>
<sequence length="355" mass="39434">MKKHNFNAGPSILPREVIEDTAKAILDFNGSGLSLMEISHRAKDFQPVVDEAEALFKELLNIPEGYSVLFLGGGASMEFCMVPFNFLEKKAAYLNTGVWAKKAMKEAKGFGEVVEVASSAEATYTYIPKDYTIPADADYFHITTNNTIYGTELKEDLNSPVPMVADMSSDIFSRPIDVSKYICIYGGAQKNLAPAGVTFVIVKNDAVGKVSRYIPSMLNYQTHIDNGSMFNTPPVVPIYAALLNLRWIKAQGGVKEMERRAIEKADMLYAEIDRNKLFVGTAAKEDRSRMNICFVMAPEYKDLEADFMKFATEKGMVGIKGHRSVGGFRASCYNALPKESVQALIDCMQEFEKLH</sequence>
<accession>Q8A8L4</accession>
<dbReference type="EC" id="2.6.1.52" evidence="1"/>
<dbReference type="EMBL" id="AE015928">
    <property type="protein sequence ID" value="AAO76260.1"/>
    <property type="molecule type" value="Genomic_DNA"/>
</dbReference>
<dbReference type="RefSeq" id="NP_810066.1">
    <property type="nucleotide sequence ID" value="NC_004663.1"/>
</dbReference>
<dbReference type="RefSeq" id="WP_008763483.1">
    <property type="nucleotide sequence ID" value="NZ_UYXG01000007.1"/>
</dbReference>
<dbReference type="SMR" id="Q8A8L4"/>
<dbReference type="FunCoup" id="Q8A8L4">
    <property type="interactions" value="449"/>
</dbReference>
<dbReference type="STRING" id="226186.BT_1153"/>
<dbReference type="PaxDb" id="226186-BT_1153"/>
<dbReference type="EnsemblBacteria" id="AAO76260">
    <property type="protein sequence ID" value="AAO76260"/>
    <property type="gene ID" value="BT_1153"/>
</dbReference>
<dbReference type="GeneID" id="60927130"/>
<dbReference type="KEGG" id="bth:BT_1153"/>
<dbReference type="PATRIC" id="fig|226186.12.peg.1175"/>
<dbReference type="eggNOG" id="COG1932">
    <property type="taxonomic scope" value="Bacteria"/>
</dbReference>
<dbReference type="HOGENOM" id="CLU_034866_0_2_10"/>
<dbReference type="InParanoid" id="Q8A8L4"/>
<dbReference type="OrthoDB" id="9809412at2"/>
<dbReference type="UniPathway" id="UPA00135">
    <property type="reaction ID" value="UER00197"/>
</dbReference>
<dbReference type="UniPathway" id="UPA00244">
    <property type="reaction ID" value="UER00311"/>
</dbReference>
<dbReference type="Proteomes" id="UP000001414">
    <property type="component" value="Chromosome"/>
</dbReference>
<dbReference type="GO" id="GO:0005737">
    <property type="term" value="C:cytoplasm"/>
    <property type="evidence" value="ECO:0000318"/>
    <property type="project" value="GO_Central"/>
</dbReference>
<dbReference type="GO" id="GO:0004648">
    <property type="term" value="F:O-phospho-L-serine:2-oxoglutarate aminotransferase activity"/>
    <property type="evidence" value="ECO:0000318"/>
    <property type="project" value="GO_Central"/>
</dbReference>
<dbReference type="GO" id="GO:0030170">
    <property type="term" value="F:pyridoxal phosphate binding"/>
    <property type="evidence" value="ECO:0000318"/>
    <property type="project" value="GO_Central"/>
</dbReference>
<dbReference type="GO" id="GO:0006564">
    <property type="term" value="P:L-serine biosynthetic process"/>
    <property type="evidence" value="ECO:0000318"/>
    <property type="project" value="GO_Central"/>
</dbReference>
<dbReference type="GO" id="GO:0008615">
    <property type="term" value="P:pyridoxine biosynthetic process"/>
    <property type="evidence" value="ECO:0007669"/>
    <property type="project" value="UniProtKB-UniRule"/>
</dbReference>
<dbReference type="CDD" id="cd00611">
    <property type="entry name" value="PSAT_like"/>
    <property type="match status" value="1"/>
</dbReference>
<dbReference type="FunFam" id="3.40.640.10:FF:000010">
    <property type="entry name" value="Phosphoserine aminotransferase"/>
    <property type="match status" value="1"/>
</dbReference>
<dbReference type="FunFam" id="3.90.1150.10:FF:000006">
    <property type="entry name" value="Phosphoserine aminotransferase"/>
    <property type="match status" value="1"/>
</dbReference>
<dbReference type="Gene3D" id="3.90.1150.10">
    <property type="entry name" value="Aspartate Aminotransferase, domain 1"/>
    <property type="match status" value="1"/>
</dbReference>
<dbReference type="Gene3D" id="3.40.640.10">
    <property type="entry name" value="Type I PLP-dependent aspartate aminotransferase-like (Major domain)"/>
    <property type="match status" value="1"/>
</dbReference>
<dbReference type="HAMAP" id="MF_00160">
    <property type="entry name" value="SerC_aminotrans_5"/>
    <property type="match status" value="1"/>
</dbReference>
<dbReference type="InterPro" id="IPR000192">
    <property type="entry name" value="Aminotrans_V_dom"/>
</dbReference>
<dbReference type="InterPro" id="IPR022278">
    <property type="entry name" value="Pser_aminoTfrase"/>
</dbReference>
<dbReference type="InterPro" id="IPR015424">
    <property type="entry name" value="PyrdxlP-dep_Trfase"/>
</dbReference>
<dbReference type="InterPro" id="IPR015421">
    <property type="entry name" value="PyrdxlP-dep_Trfase_major"/>
</dbReference>
<dbReference type="InterPro" id="IPR015422">
    <property type="entry name" value="PyrdxlP-dep_Trfase_small"/>
</dbReference>
<dbReference type="NCBIfam" id="NF003764">
    <property type="entry name" value="PRK05355.1"/>
    <property type="match status" value="1"/>
</dbReference>
<dbReference type="NCBIfam" id="TIGR01364">
    <property type="entry name" value="serC_1"/>
    <property type="match status" value="1"/>
</dbReference>
<dbReference type="PANTHER" id="PTHR43247">
    <property type="entry name" value="PHOSPHOSERINE AMINOTRANSFERASE"/>
    <property type="match status" value="1"/>
</dbReference>
<dbReference type="PANTHER" id="PTHR43247:SF1">
    <property type="entry name" value="PHOSPHOSERINE AMINOTRANSFERASE"/>
    <property type="match status" value="1"/>
</dbReference>
<dbReference type="Pfam" id="PF00266">
    <property type="entry name" value="Aminotran_5"/>
    <property type="match status" value="1"/>
</dbReference>
<dbReference type="PIRSF" id="PIRSF000525">
    <property type="entry name" value="SerC"/>
    <property type="match status" value="1"/>
</dbReference>
<dbReference type="SUPFAM" id="SSF53383">
    <property type="entry name" value="PLP-dependent transferases"/>
    <property type="match status" value="1"/>
</dbReference>
<comment type="function">
    <text evidence="1">Catalyzes the reversible conversion of 3-phosphohydroxypyruvate to phosphoserine and of 3-hydroxy-2-oxo-4-phosphonooxybutanoate to phosphohydroxythreonine.</text>
</comment>
<comment type="catalytic activity">
    <reaction evidence="1">
        <text>O-phospho-L-serine + 2-oxoglutarate = 3-phosphooxypyruvate + L-glutamate</text>
        <dbReference type="Rhea" id="RHEA:14329"/>
        <dbReference type="ChEBI" id="CHEBI:16810"/>
        <dbReference type="ChEBI" id="CHEBI:18110"/>
        <dbReference type="ChEBI" id="CHEBI:29985"/>
        <dbReference type="ChEBI" id="CHEBI:57524"/>
        <dbReference type="EC" id="2.6.1.52"/>
    </reaction>
</comment>
<comment type="catalytic activity">
    <reaction evidence="1">
        <text>4-(phosphooxy)-L-threonine + 2-oxoglutarate = (R)-3-hydroxy-2-oxo-4-phosphooxybutanoate + L-glutamate</text>
        <dbReference type="Rhea" id="RHEA:16573"/>
        <dbReference type="ChEBI" id="CHEBI:16810"/>
        <dbReference type="ChEBI" id="CHEBI:29985"/>
        <dbReference type="ChEBI" id="CHEBI:58452"/>
        <dbReference type="ChEBI" id="CHEBI:58538"/>
        <dbReference type="EC" id="2.6.1.52"/>
    </reaction>
</comment>
<comment type="cofactor">
    <cofactor evidence="1">
        <name>pyridoxal 5'-phosphate</name>
        <dbReference type="ChEBI" id="CHEBI:597326"/>
    </cofactor>
    <text evidence="1">Binds 1 pyridoxal phosphate per subunit.</text>
</comment>
<comment type="pathway">
    <text evidence="1">Amino-acid biosynthesis; L-serine biosynthesis; L-serine from 3-phospho-D-glycerate: step 2/3.</text>
</comment>
<comment type="pathway">
    <text evidence="1">Cofactor biosynthesis; pyridoxine 5'-phosphate biosynthesis; pyridoxine 5'-phosphate from D-erythrose 4-phosphate: step 3/5.</text>
</comment>
<comment type="subunit">
    <text evidence="1">Homodimer.</text>
</comment>
<comment type="subcellular location">
    <subcellularLocation>
        <location evidence="1">Cytoplasm</location>
    </subcellularLocation>
</comment>
<comment type="similarity">
    <text evidence="1">Belongs to the class-V pyridoxal-phosphate-dependent aminotransferase family. SerC subfamily.</text>
</comment>
<organism>
    <name type="scientific">Bacteroides thetaiotaomicron (strain ATCC 29148 / DSM 2079 / JCM 5827 / CCUG 10774 / NCTC 10582 / VPI-5482 / E50)</name>
    <dbReference type="NCBI Taxonomy" id="226186"/>
    <lineage>
        <taxon>Bacteria</taxon>
        <taxon>Pseudomonadati</taxon>
        <taxon>Bacteroidota</taxon>
        <taxon>Bacteroidia</taxon>
        <taxon>Bacteroidales</taxon>
        <taxon>Bacteroidaceae</taxon>
        <taxon>Bacteroides</taxon>
    </lineage>
</organism>
<proteinExistence type="inferred from homology"/>
<evidence type="ECO:0000255" key="1">
    <source>
        <dbReference type="HAMAP-Rule" id="MF_00160"/>
    </source>
</evidence>
<reference key="1">
    <citation type="journal article" date="2003" name="Science">
        <title>A genomic view of the human-Bacteroides thetaiotaomicron symbiosis.</title>
        <authorList>
            <person name="Xu J."/>
            <person name="Bjursell M.K."/>
            <person name="Himrod J."/>
            <person name="Deng S."/>
            <person name="Carmichael L.K."/>
            <person name="Chiang H.C."/>
            <person name="Hooper L.V."/>
            <person name="Gordon J.I."/>
        </authorList>
    </citation>
    <scope>NUCLEOTIDE SEQUENCE [LARGE SCALE GENOMIC DNA]</scope>
    <source>
        <strain>ATCC 29148 / DSM 2079 / JCM 5827 / CCUG 10774 / NCTC 10582 / VPI-5482 / E50</strain>
    </source>
</reference>
<gene>
    <name evidence="1" type="primary">serC</name>
    <name type="ordered locus">BT_1153</name>
</gene>